<keyword id="KW-0067">ATP-binding</keyword>
<keyword id="KW-0436">Ligase</keyword>
<keyword id="KW-0547">Nucleotide-binding</keyword>
<keyword id="KW-0658">Purine biosynthesis</keyword>
<keyword id="KW-1185">Reference proteome</keyword>
<dbReference type="EC" id="6.3.2.6" evidence="1"/>
<dbReference type="EMBL" id="CP000774">
    <property type="protein sequence ID" value="ABS64197.1"/>
    <property type="molecule type" value="Genomic_DNA"/>
</dbReference>
<dbReference type="RefSeq" id="WP_012111509.1">
    <property type="nucleotide sequence ID" value="NC_009719.1"/>
</dbReference>
<dbReference type="SMR" id="A7HWB4"/>
<dbReference type="STRING" id="402881.Plav_2589"/>
<dbReference type="KEGG" id="pla:Plav_2589"/>
<dbReference type="eggNOG" id="COG0152">
    <property type="taxonomic scope" value="Bacteria"/>
</dbReference>
<dbReference type="HOGENOM" id="CLU_061495_2_0_5"/>
<dbReference type="OrthoDB" id="9801549at2"/>
<dbReference type="UniPathway" id="UPA00074">
    <property type="reaction ID" value="UER00131"/>
</dbReference>
<dbReference type="Proteomes" id="UP000006377">
    <property type="component" value="Chromosome"/>
</dbReference>
<dbReference type="GO" id="GO:0005829">
    <property type="term" value="C:cytosol"/>
    <property type="evidence" value="ECO:0007669"/>
    <property type="project" value="TreeGrafter"/>
</dbReference>
<dbReference type="GO" id="GO:0005524">
    <property type="term" value="F:ATP binding"/>
    <property type="evidence" value="ECO:0007669"/>
    <property type="project" value="UniProtKB-KW"/>
</dbReference>
<dbReference type="GO" id="GO:0004639">
    <property type="term" value="F:phosphoribosylaminoimidazolesuccinocarboxamide synthase activity"/>
    <property type="evidence" value="ECO:0007669"/>
    <property type="project" value="UniProtKB-UniRule"/>
</dbReference>
<dbReference type="GO" id="GO:0006189">
    <property type="term" value="P:'de novo' IMP biosynthetic process"/>
    <property type="evidence" value="ECO:0007669"/>
    <property type="project" value="UniProtKB-UniRule"/>
</dbReference>
<dbReference type="GO" id="GO:0009236">
    <property type="term" value="P:cobalamin biosynthetic process"/>
    <property type="evidence" value="ECO:0007669"/>
    <property type="project" value="InterPro"/>
</dbReference>
<dbReference type="CDD" id="cd01415">
    <property type="entry name" value="SAICAR_synt_PurC"/>
    <property type="match status" value="1"/>
</dbReference>
<dbReference type="FunFam" id="3.30.470.20:FF:000006">
    <property type="entry name" value="Phosphoribosylaminoimidazole-succinocarboxamide synthase"/>
    <property type="match status" value="1"/>
</dbReference>
<dbReference type="Gene3D" id="3.30.470.20">
    <property type="entry name" value="ATP-grasp fold, B domain"/>
    <property type="match status" value="1"/>
</dbReference>
<dbReference type="Gene3D" id="3.30.200.20">
    <property type="entry name" value="Phosphorylase Kinase, domain 1"/>
    <property type="match status" value="1"/>
</dbReference>
<dbReference type="HAMAP" id="MF_00137">
    <property type="entry name" value="SAICAR_synth"/>
    <property type="match status" value="1"/>
</dbReference>
<dbReference type="InterPro" id="IPR028923">
    <property type="entry name" value="SAICAR_synt/ADE2_N"/>
</dbReference>
<dbReference type="InterPro" id="IPR033934">
    <property type="entry name" value="SAICAR_synt_PurC"/>
</dbReference>
<dbReference type="InterPro" id="IPR001636">
    <property type="entry name" value="SAICAR_synth"/>
</dbReference>
<dbReference type="InterPro" id="IPR050089">
    <property type="entry name" value="SAICAR_synthetase"/>
</dbReference>
<dbReference type="NCBIfam" id="TIGR00081">
    <property type="entry name" value="purC"/>
    <property type="match status" value="1"/>
</dbReference>
<dbReference type="PANTHER" id="PTHR43599">
    <property type="entry name" value="MULTIFUNCTIONAL PROTEIN ADE2"/>
    <property type="match status" value="1"/>
</dbReference>
<dbReference type="PANTHER" id="PTHR43599:SF3">
    <property type="entry name" value="SI:DKEY-6E2.2"/>
    <property type="match status" value="1"/>
</dbReference>
<dbReference type="Pfam" id="PF01259">
    <property type="entry name" value="SAICAR_synt"/>
    <property type="match status" value="1"/>
</dbReference>
<dbReference type="SUPFAM" id="SSF56104">
    <property type="entry name" value="SAICAR synthase-like"/>
    <property type="match status" value="1"/>
</dbReference>
<organism>
    <name type="scientific">Parvibaculum lavamentivorans (strain DS-1 / DSM 13023 / NCIMB 13966)</name>
    <dbReference type="NCBI Taxonomy" id="402881"/>
    <lineage>
        <taxon>Bacteria</taxon>
        <taxon>Pseudomonadati</taxon>
        <taxon>Pseudomonadota</taxon>
        <taxon>Alphaproteobacteria</taxon>
        <taxon>Hyphomicrobiales</taxon>
        <taxon>Parvibaculaceae</taxon>
        <taxon>Parvibaculum</taxon>
    </lineage>
</organism>
<sequence>MSRRRRVYEGKAKVLYEGPEPGTLIQHFKDDATAFDAQKRATIEGKGVLNNRISEFIFTRLNEIGVPTHFIRALNMREQLIREVEIIPCEVVVRNVAAGSLSKRLGIDEGTVLPRSIIEFYYKNDELHDPMVSEEHITAFGWATPQEIDDMMALALRINDFLTGLFLGIGIRLVDFKVEFGRLYEGEMVRVVLADEISPDCCRLWDTRTNDKMDKDRFRRDMGGLIEAYSEVARRLGILFENEPKRSGPKLVK</sequence>
<comment type="catalytic activity">
    <reaction evidence="1">
        <text>5-amino-1-(5-phospho-D-ribosyl)imidazole-4-carboxylate + L-aspartate + ATP = (2S)-2-[5-amino-1-(5-phospho-beta-D-ribosyl)imidazole-4-carboxamido]succinate + ADP + phosphate + 2 H(+)</text>
        <dbReference type="Rhea" id="RHEA:22628"/>
        <dbReference type="ChEBI" id="CHEBI:15378"/>
        <dbReference type="ChEBI" id="CHEBI:29991"/>
        <dbReference type="ChEBI" id="CHEBI:30616"/>
        <dbReference type="ChEBI" id="CHEBI:43474"/>
        <dbReference type="ChEBI" id="CHEBI:58443"/>
        <dbReference type="ChEBI" id="CHEBI:77657"/>
        <dbReference type="ChEBI" id="CHEBI:456216"/>
        <dbReference type="EC" id="6.3.2.6"/>
    </reaction>
</comment>
<comment type="pathway">
    <text evidence="1">Purine metabolism; IMP biosynthesis via de novo pathway; 5-amino-1-(5-phospho-D-ribosyl)imidazole-4-carboxamide from 5-amino-1-(5-phospho-D-ribosyl)imidazole-4-carboxylate: step 1/2.</text>
</comment>
<comment type="similarity">
    <text evidence="1">Belongs to the SAICAR synthetase family.</text>
</comment>
<protein>
    <recommendedName>
        <fullName evidence="1">Phosphoribosylaminoimidazole-succinocarboxamide synthase</fullName>
        <ecNumber evidence="1">6.3.2.6</ecNumber>
    </recommendedName>
    <alternativeName>
        <fullName evidence="1">SAICAR synthetase</fullName>
    </alternativeName>
</protein>
<name>PUR7_PARL1</name>
<evidence type="ECO:0000255" key="1">
    <source>
        <dbReference type="HAMAP-Rule" id="MF_00137"/>
    </source>
</evidence>
<feature type="chain" id="PRO_1000071448" description="Phosphoribosylaminoimidazole-succinocarboxamide synthase">
    <location>
        <begin position="1"/>
        <end position="253"/>
    </location>
</feature>
<reference key="1">
    <citation type="journal article" date="2011" name="Stand. Genomic Sci.">
        <title>Complete genome sequence of Parvibaculum lavamentivorans type strain (DS-1(T)).</title>
        <authorList>
            <person name="Schleheck D."/>
            <person name="Weiss M."/>
            <person name="Pitluck S."/>
            <person name="Bruce D."/>
            <person name="Land M.L."/>
            <person name="Han S."/>
            <person name="Saunders E."/>
            <person name="Tapia R."/>
            <person name="Detter C."/>
            <person name="Brettin T."/>
            <person name="Han J."/>
            <person name="Woyke T."/>
            <person name="Goodwin L."/>
            <person name="Pennacchio L."/>
            <person name="Nolan M."/>
            <person name="Cook A.M."/>
            <person name="Kjelleberg S."/>
            <person name="Thomas T."/>
        </authorList>
    </citation>
    <scope>NUCLEOTIDE SEQUENCE [LARGE SCALE GENOMIC DNA]</scope>
    <source>
        <strain>DS-1 / DSM 13023 / NCIMB 13966</strain>
    </source>
</reference>
<proteinExistence type="inferred from homology"/>
<gene>
    <name evidence="1" type="primary">purC</name>
    <name type="ordered locus">Plav_2589</name>
</gene>
<accession>A7HWB4</accession>